<gene>
    <name type="primary">YMF33</name>
</gene>
<sequence>MKKFDILDFFYIKSQDTQILRYYISKNPTNYGGLSLTNGAEGKTSTMAKSLNTTPTLDTMPMFTEDVCFAAYSIDMQKILHNMKLKTNLEYPGLLFDHEGPDCLPLIKEAYGFVDKSFWVLPGRGKELFKDVKKVR</sequence>
<evidence type="ECO:0000305" key="1"/>
<geneLocation type="mitochondrion"/>
<dbReference type="EMBL" id="M68929">
    <property type="protein sequence ID" value="AAC09449.1"/>
    <property type="molecule type" value="Genomic_DNA"/>
</dbReference>
<dbReference type="PIR" id="S26000">
    <property type="entry name" value="S26000"/>
</dbReference>
<dbReference type="GO" id="GO:0005739">
    <property type="term" value="C:mitochondrion"/>
    <property type="evidence" value="ECO:0007669"/>
    <property type="project" value="UniProtKB-SubCell"/>
</dbReference>
<protein>
    <recommendedName>
        <fullName>Uncharacterized mitochondrial protein ymf33</fullName>
    </recommendedName>
    <alternativeName>
        <fullName>ORF136</fullName>
    </alternativeName>
</protein>
<accession>P38475</accession>
<feature type="chain" id="PRO_0000196860" description="Uncharacterized mitochondrial protein ymf33">
    <location>
        <begin position="1"/>
        <end position="136"/>
    </location>
</feature>
<proteinExistence type="predicted"/>
<organism>
    <name type="scientific">Marchantia polymorpha</name>
    <name type="common">Common liverwort</name>
    <name type="synonym">Marchantia aquatica</name>
    <dbReference type="NCBI Taxonomy" id="3197"/>
    <lineage>
        <taxon>Eukaryota</taxon>
        <taxon>Viridiplantae</taxon>
        <taxon>Streptophyta</taxon>
        <taxon>Embryophyta</taxon>
        <taxon>Marchantiophyta</taxon>
        <taxon>Marchantiopsida</taxon>
        <taxon>Marchantiidae</taxon>
        <taxon>Marchantiales</taxon>
        <taxon>Marchantiaceae</taxon>
        <taxon>Marchantia</taxon>
    </lineage>
</organism>
<keyword id="KW-0496">Mitochondrion</keyword>
<reference key="1">
    <citation type="journal article" date="1992" name="J. Mol. Biol.">
        <title>Gene organization deduced from the complete sequence of liverwort Marchantia polymorpha mitochondrial DNA. A primitive form of plant mitochondrial genome.</title>
        <authorList>
            <person name="Oda K."/>
            <person name="Yamato K."/>
            <person name="Ohta E."/>
            <person name="Nakamura Y."/>
            <person name="Takemura M."/>
            <person name="Nozato N."/>
            <person name="Akashi K."/>
            <person name="Kanegae T."/>
            <person name="Ogura Y."/>
            <person name="Kohchi T."/>
            <person name="Ohyama K."/>
        </authorList>
    </citation>
    <scope>NUCLEOTIDE SEQUENCE [GENOMIC DNA]</scope>
</reference>
<name>YMF33_MARPO</name>
<comment type="subcellular location">
    <subcellularLocation>
        <location evidence="1">Mitochondrion</location>
    </subcellularLocation>
</comment>